<evidence type="ECO:0000255" key="1">
    <source>
        <dbReference type="HAMAP-Rule" id="MF_00246"/>
    </source>
</evidence>
<protein>
    <recommendedName>
        <fullName evidence="1">Galactokinase</fullName>
        <ecNumber evidence="1">2.7.1.6</ecNumber>
    </recommendedName>
    <alternativeName>
        <fullName evidence="1">Galactose kinase</fullName>
    </alternativeName>
</protein>
<keyword id="KW-0067">ATP-binding</keyword>
<keyword id="KW-0119">Carbohydrate metabolism</keyword>
<keyword id="KW-0963">Cytoplasm</keyword>
<keyword id="KW-0299">Galactose metabolism</keyword>
<keyword id="KW-0418">Kinase</keyword>
<keyword id="KW-0460">Magnesium</keyword>
<keyword id="KW-0479">Metal-binding</keyword>
<keyword id="KW-0547">Nucleotide-binding</keyword>
<keyword id="KW-1185">Reference proteome</keyword>
<keyword id="KW-0808">Transferase</keyword>
<accession>P57899</accession>
<comment type="function">
    <text evidence="1">Catalyzes the transfer of the gamma-phosphate of ATP to D-galactose to form alpha-D-galactose-1-phosphate (Gal-1-P).</text>
</comment>
<comment type="catalytic activity">
    <reaction evidence="1">
        <text>alpha-D-galactose + ATP = alpha-D-galactose 1-phosphate + ADP + H(+)</text>
        <dbReference type="Rhea" id="RHEA:13553"/>
        <dbReference type="ChEBI" id="CHEBI:15378"/>
        <dbReference type="ChEBI" id="CHEBI:28061"/>
        <dbReference type="ChEBI" id="CHEBI:30616"/>
        <dbReference type="ChEBI" id="CHEBI:58336"/>
        <dbReference type="ChEBI" id="CHEBI:456216"/>
        <dbReference type="EC" id="2.7.1.6"/>
    </reaction>
</comment>
<comment type="pathway">
    <text evidence="1">Carbohydrate metabolism; galactose metabolism.</text>
</comment>
<comment type="subcellular location">
    <subcellularLocation>
        <location evidence="1">Cytoplasm</location>
    </subcellularLocation>
</comment>
<comment type="similarity">
    <text evidence="1">Belongs to the GHMP kinase family. GalK subfamily.</text>
</comment>
<reference key="1">
    <citation type="journal article" date="2001" name="Proc. Natl. Acad. Sci. U.S.A.">
        <title>Complete genomic sequence of Pasteurella multocida Pm70.</title>
        <authorList>
            <person name="May B.J."/>
            <person name="Zhang Q."/>
            <person name="Li L.L."/>
            <person name="Paustian M.L."/>
            <person name="Whittam T.S."/>
            <person name="Kapur V."/>
        </authorList>
    </citation>
    <scope>NUCLEOTIDE SEQUENCE [LARGE SCALE GENOMIC DNA]</scope>
    <source>
        <strain>Pm70</strain>
    </source>
</reference>
<proteinExistence type="inferred from homology"/>
<feature type="chain" id="PRO_0000184620" description="Galactokinase">
    <location>
        <begin position="1"/>
        <end position="385"/>
    </location>
</feature>
<feature type="active site" description="Proton acceptor" evidence="1">
    <location>
        <position position="174"/>
    </location>
</feature>
<feature type="binding site" evidence="1">
    <location>
        <begin position="34"/>
        <end position="37"/>
    </location>
    <ligand>
        <name>substrate</name>
    </ligand>
</feature>
<feature type="binding site" evidence="1">
    <location>
        <begin position="124"/>
        <end position="130"/>
    </location>
    <ligand>
        <name>ATP</name>
        <dbReference type="ChEBI" id="CHEBI:30616"/>
    </ligand>
</feature>
<feature type="binding site" evidence="1">
    <location>
        <position position="130"/>
    </location>
    <ligand>
        <name>Mg(2+)</name>
        <dbReference type="ChEBI" id="CHEBI:18420"/>
    </ligand>
</feature>
<feature type="binding site" evidence="1">
    <location>
        <position position="162"/>
    </location>
    <ligand>
        <name>Mg(2+)</name>
        <dbReference type="ChEBI" id="CHEBI:18420"/>
    </ligand>
</feature>
<feature type="binding site" evidence="1">
    <location>
        <position position="223"/>
    </location>
    <ligand>
        <name>substrate</name>
    </ligand>
</feature>
<feature type="site" description="Transition state stabilizer" evidence="1">
    <location>
        <position position="28"/>
    </location>
</feature>
<gene>
    <name evidence="1" type="primary">galK</name>
    <name type="ordered locus">PM1035</name>
</gene>
<organism>
    <name type="scientific">Pasteurella multocida (strain Pm70)</name>
    <dbReference type="NCBI Taxonomy" id="272843"/>
    <lineage>
        <taxon>Bacteria</taxon>
        <taxon>Pseudomonadati</taxon>
        <taxon>Pseudomonadota</taxon>
        <taxon>Gammaproteobacteria</taxon>
        <taxon>Pasteurellales</taxon>
        <taxon>Pasteurellaceae</taxon>
        <taxon>Pasteurella</taxon>
    </lineage>
</organism>
<name>GAL1_PASMU</name>
<dbReference type="EC" id="2.7.1.6" evidence="1"/>
<dbReference type="EMBL" id="AE004439">
    <property type="protein sequence ID" value="AAK03119.1"/>
    <property type="molecule type" value="Genomic_DNA"/>
</dbReference>
<dbReference type="RefSeq" id="WP_010906982.1">
    <property type="nucleotide sequence ID" value="NC_002663.1"/>
</dbReference>
<dbReference type="SMR" id="P57899"/>
<dbReference type="STRING" id="272843.PM1035"/>
<dbReference type="EnsemblBacteria" id="AAK03119">
    <property type="protein sequence ID" value="AAK03119"/>
    <property type="gene ID" value="PM1035"/>
</dbReference>
<dbReference type="KEGG" id="pmu:PM1035"/>
<dbReference type="PATRIC" id="fig|272843.6.peg.1048"/>
<dbReference type="HOGENOM" id="CLU_017814_2_1_6"/>
<dbReference type="OrthoDB" id="250531at2"/>
<dbReference type="UniPathway" id="UPA00214"/>
<dbReference type="Proteomes" id="UP000000809">
    <property type="component" value="Chromosome"/>
</dbReference>
<dbReference type="GO" id="GO:0005829">
    <property type="term" value="C:cytosol"/>
    <property type="evidence" value="ECO:0007669"/>
    <property type="project" value="TreeGrafter"/>
</dbReference>
<dbReference type="GO" id="GO:0005524">
    <property type="term" value="F:ATP binding"/>
    <property type="evidence" value="ECO:0007669"/>
    <property type="project" value="UniProtKB-UniRule"/>
</dbReference>
<dbReference type="GO" id="GO:0004335">
    <property type="term" value="F:galactokinase activity"/>
    <property type="evidence" value="ECO:0007669"/>
    <property type="project" value="UniProtKB-UniRule"/>
</dbReference>
<dbReference type="GO" id="GO:0000287">
    <property type="term" value="F:magnesium ion binding"/>
    <property type="evidence" value="ECO:0007669"/>
    <property type="project" value="UniProtKB-UniRule"/>
</dbReference>
<dbReference type="GO" id="GO:0006012">
    <property type="term" value="P:galactose metabolic process"/>
    <property type="evidence" value="ECO:0007669"/>
    <property type="project" value="UniProtKB-UniRule"/>
</dbReference>
<dbReference type="FunFam" id="3.30.230.10:FF:000017">
    <property type="entry name" value="Galactokinase"/>
    <property type="match status" value="1"/>
</dbReference>
<dbReference type="FunFam" id="3.30.70.890:FF:000001">
    <property type="entry name" value="Galactokinase"/>
    <property type="match status" value="1"/>
</dbReference>
<dbReference type="Gene3D" id="3.30.230.10">
    <property type="match status" value="1"/>
</dbReference>
<dbReference type="Gene3D" id="3.30.70.890">
    <property type="entry name" value="GHMP kinase, C-terminal domain"/>
    <property type="match status" value="1"/>
</dbReference>
<dbReference type="HAMAP" id="MF_00246">
    <property type="entry name" value="Galactokinase"/>
    <property type="match status" value="1"/>
</dbReference>
<dbReference type="InterPro" id="IPR000705">
    <property type="entry name" value="Galactokinase"/>
</dbReference>
<dbReference type="InterPro" id="IPR022963">
    <property type="entry name" value="Galactokinase_bac"/>
</dbReference>
<dbReference type="InterPro" id="IPR019741">
    <property type="entry name" value="Galactokinase_CS"/>
</dbReference>
<dbReference type="InterPro" id="IPR019539">
    <property type="entry name" value="GalKase_N"/>
</dbReference>
<dbReference type="InterPro" id="IPR013750">
    <property type="entry name" value="GHMP_kinase_C_dom"/>
</dbReference>
<dbReference type="InterPro" id="IPR036554">
    <property type="entry name" value="GHMP_kinase_C_sf"/>
</dbReference>
<dbReference type="InterPro" id="IPR006204">
    <property type="entry name" value="GHMP_kinase_N_dom"/>
</dbReference>
<dbReference type="InterPro" id="IPR006203">
    <property type="entry name" value="GHMP_knse_ATP-bd_CS"/>
</dbReference>
<dbReference type="InterPro" id="IPR006206">
    <property type="entry name" value="Mevalonate/galactokinase"/>
</dbReference>
<dbReference type="InterPro" id="IPR020568">
    <property type="entry name" value="Ribosomal_Su5_D2-typ_SF"/>
</dbReference>
<dbReference type="InterPro" id="IPR014721">
    <property type="entry name" value="Ribsml_uS5_D2-typ_fold_subgr"/>
</dbReference>
<dbReference type="NCBIfam" id="TIGR00131">
    <property type="entry name" value="gal_kin"/>
    <property type="match status" value="1"/>
</dbReference>
<dbReference type="NCBIfam" id="NF003472">
    <property type="entry name" value="PRK05101.1"/>
    <property type="match status" value="1"/>
</dbReference>
<dbReference type="PANTHER" id="PTHR10457:SF7">
    <property type="entry name" value="GALACTOKINASE-RELATED"/>
    <property type="match status" value="1"/>
</dbReference>
<dbReference type="PANTHER" id="PTHR10457">
    <property type="entry name" value="MEVALONATE KINASE/GALACTOKINASE"/>
    <property type="match status" value="1"/>
</dbReference>
<dbReference type="Pfam" id="PF10509">
    <property type="entry name" value="GalKase_gal_bdg"/>
    <property type="match status" value="1"/>
</dbReference>
<dbReference type="Pfam" id="PF08544">
    <property type="entry name" value="GHMP_kinases_C"/>
    <property type="match status" value="1"/>
</dbReference>
<dbReference type="Pfam" id="PF00288">
    <property type="entry name" value="GHMP_kinases_N"/>
    <property type="match status" value="1"/>
</dbReference>
<dbReference type="PIRSF" id="PIRSF000530">
    <property type="entry name" value="Galactokinase"/>
    <property type="match status" value="1"/>
</dbReference>
<dbReference type="PRINTS" id="PR00473">
    <property type="entry name" value="GALCTOKINASE"/>
</dbReference>
<dbReference type="PRINTS" id="PR00959">
    <property type="entry name" value="MEVGALKINASE"/>
</dbReference>
<dbReference type="SUPFAM" id="SSF55060">
    <property type="entry name" value="GHMP Kinase, C-terminal domain"/>
    <property type="match status" value="1"/>
</dbReference>
<dbReference type="SUPFAM" id="SSF54211">
    <property type="entry name" value="Ribosomal protein S5 domain 2-like"/>
    <property type="match status" value="1"/>
</dbReference>
<dbReference type="PROSITE" id="PS00106">
    <property type="entry name" value="GALACTOKINASE"/>
    <property type="match status" value="1"/>
</dbReference>
<dbReference type="PROSITE" id="PS00627">
    <property type="entry name" value="GHMP_KINASES_ATP"/>
    <property type="match status" value="1"/>
</dbReference>
<sequence length="385" mass="41923">MTPQQSAQRLFQEKFNCTPTLNVYAPGRVNIIGEHTDYNDGFVMPCAINYGTAISGRKRDDSRFKVYAGDLQQWDEFDLAQEITPDSSKKWTGYVRGVVKFVQTHCPDFKCGADLVISGNVPLSAGLSSSASLEVAVGKFCQQLGNLPLTNTEIALIGQKAENQFVGCQCGNMDQLISALGQKDHLLMIDCRSLETIPTPIPANVAVMIVNSHVKHDLVAGEYNTRRQQCEVAAKFFGVKALRDVSLAQFKQREAELTALDPEVAKRARHVVTENQRVLDAVKALQSGNLALLGELMAQSHESMRDDFEITVPQIDYLVELAQIAIGKTGGARMTGGGFGGCIVAVAPVEKVEAVRQIIADNYAQQTGLKEDFYVCTASQGVSVC</sequence>